<accession>Q057C1</accession>
<gene>
    <name evidence="1" type="primary">rpsE</name>
    <name type="ordered locus">BCc_324</name>
</gene>
<organism>
    <name type="scientific">Buchnera aphidicola subsp. Cinara cedri (strain Cc)</name>
    <dbReference type="NCBI Taxonomy" id="372461"/>
    <lineage>
        <taxon>Bacteria</taxon>
        <taxon>Pseudomonadati</taxon>
        <taxon>Pseudomonadota</taxon>
        <taxon>Gammaproteobacteria</taxon>
        <taxon>Enterobacterales</taxon>
        <taxon>Erwiniaceae</taxon>
        <taxon>Buchnera</taxon>
    </lineage>
</organism>
<feature type="chain" id="PRO_0000323083" description="Small ribosomal subunit protein uS5">
    <location>
        <begin position="1"/>
        <end position="164"/>
    </location>
</feature>
<feature type="domain" description="S5 DRBM" evidence="1">
    <location>
        <begin position="11"/>
        <end position="74"/>
    </location>
</feature>
<dbReference type="EMBL" id="CP000263">
    <property type="protein sequence ID" value="ABJ90778.1"/>
    <property type="molecule type" value="Genomic_DNA"/>
</dbReference>
<dbReference type="RefSeq" id="WP_011672697.1">
    <property type="nucleotide sequence ID" value="NC_008513.1"/>
</dbReference>
<dbReference type="SMR" id="Q057C1"/>
<dbReference type="STRING" id="372461.BCc_324"/>
<dbReference type="KEGG" id="bcc:BCc_324"/>
<dbReference type="eggNOG" id="COG0098">
    <property type="taxonomic scope" value="Bacteria"/>
</dbReference>
<dbReference type="HOGENOM" id="CLU_065898_2_2_6"/>
<dbReference type="OrthoDB" id="9809045at2"/>
<dbReference type="Proteomes" id="UP000000669">
    <property type="component" value="Chromosome"/>
</dbReference>
<dbReference type="GO" id="GO:0015935">
    <property type="term" value="C:small ribosomal subunit"/>
    <property type="evidence" value="ECO:0007669"/>
    <property type="project" value="InterPro"/>
</dbReference>
<dbReference type="GO" id="GO:0019843">
    <property type="term" value="F:rRNA binding"/>
    <property type="evidence" value="ECO:0007669"/>
    <property type="project" value="UniProtKB-UniRule"/>
</dbReference>
<dbReference type="GO" id="GO:0003735">
    <property type="term" value="F:structural constituent of ribosome"/>
    <property type="evidence" value="ECO:0007669"/>
    <property type="project" value="InterPro"/>
</dbReference>
<dbReference type="GO" id="GO:0006412">
    <property type="term" value="P:translation"/>
    <property type="evidence" value="ECO:0007669"/>
    <property type="project" value="UniProtKB-UniRule"/>
</dbReference>
<dbReference type="FunFam" id="3.30.160.20:FF:000001">
    <property type="entry name" value="30S ribosomal protein S5"/>
    <property type="match status" value="1"/>
</dbReference>
<dbReference type="FunFam" id="3.30.230.10:FF:000002">
    <property type="entry name" value="30S ribosomal protein S5"/>
    <property type="match status" value="1"/>
</dbReference>
<dbReference type="Gene3D" id="3.30.160.20">
    <property type="match status" value="1"/>
</dbReference>
<dbReference type="Gene3D" id="3.30.230.10">
    <property type="match status" value="1"/>
</dbReference>
<dbReference type="HAMAP" id="MF_01307_B">
    <property type="entry name" value="Ribosomal_uS5_B"/>
    <property type="match status" value="1"/>
</dbReference>
<dbReference type="InterPro" id="IPR020568">
    <property type="entry name" value="Ribosomal_Su5_D2-typ_SF"/>
</dbReference>
<dbReference type="InterPro" id="IPR000851">
    <property type="entry name" value="Ribosomal_uS5"/>
</dbReference>
<dbReference type="InterPro" id="IPR005712">
    <property type="entry name" value="Ribosomal_uS5_bac-type"/>
</dbReference>
<dbReference type="InterPro" id="IPR005324">
    <property type="entry name" value="Ribosomal_uS5_C"/>
</dbReference>
<dbReference type="InterPro" id="IPR013810">
    <property type="entry name" value="Ribosomal_uS5_N"/>
</dbReference>
<dbReference type="InterPro" id="IPR018192">
    <property type="entry name" value="Ribosomal_uS5_N_CS"/>
</dbReference>
<dbReference type="InterPro" id="IPR014721">
    <property type="entry name" value="Ribsml_uS5_D2-typ_fold_subgr"/>
</dbReference>
<dbReference type="NCBIfam" id="TIGR01021">
    <property type="entry name" value="rpsE_bact"/>
    <property type="match status" value="1"/>
</dbReference>
<dbReference type="PANTHER" id="PTHR48277">
    <property type="entry name" value="MITOCHONDRIAL RIBOSOMAL PROTEIN S5"/>
    <property type="match status" value="1"/>
</dbReference>
<dbReference type="PANTHER" id="PTHR48277:SF1">
    <property type="entry name" value="MITOCHONDRIAL RIBOSOMAL PROTEIN S5"/>
    <property type="match status" value="1"/>
</dbReference>
<dbReference type="Pfam" id="PF00333">
    <property type="entry name" value="Ribosomal_S5"/>
    <property type="match status" value="1"/>
</dbReference>
<dbReference type="Pfam" id="PF03719">
    <property type="entry name" value="Ribosomal_S5_C"/>
    <property type="match status" value="1"/>
</dbReference>
<dbReference type="SUPFAM" id="SSF54768">
    <property type="entry name" value="dsRNA-binding domain-like"/>
    <property type="match status" value="1"/>
</dbReference>
<dbReference type="SUPFAM" id="SSF54211">
    <property type="entry name" value="Ribosomal protein S5 domain 2-like"/>
    <property type="match status" value="1"/>
</dbReference>
<dbReference type="PROSITE" id="PS00585">
    <property type="entry name" value="RIBOSOMAL_S5"/>
    <property type="match status" value="1"/>
</dbReference>
<dbReference type="PROSITE" id="PS50881">
    <property type="entry name" value="S5_DSRBD"/>
    <property type="match status" value="1"/>
</dbReference>
<reference key="1">
    <citation type="journal article" date="2006" name="Science">
        <title>A small microbial genome: the end of a long symbiotic relationship?</title>
        <authorList>
            <person name="Perez-Brocal V."/>
            <person name="Gil R."/>
            <person name="Ramos S."/>
            <person name="Lamelas A."/>
            <person name="Postigo M."/>
            <person name="Michelena J.M."/>
            <person name="Silva F.J."/>
            <person name="Moya A."/>
            <person name="Latorre A."/>
        </authorList>
    </citation>
    <scope>NUCLEOTIDE SEQUENCE [LARGE SCALE GENOMIC DNA]</scope>
    <source>
        <strain>Cc</strain>
    </source>
</reference>
<evidence type="ECO:0000255" key="1">
    <source>
        <dbReference type="HAMAP-Rule" id="MF_01307"/>
    </source>
</evidence>
<evidence type="ECO:0000305" key="2"/>
<name>RS5_BUCCC</name>
<sequence length="164" mass="17837">MHYEKKLSIELKEKLISVNRVSKTVKGGRIFSFTALTVVGNNQGKVGFGYGKAREVPSAIQKAMEKARKNMIIIPLFKNTIQHSVTGLHTGSFIFMKPASEGTGIIAGGAMRSVLEVAGIQNILAKIYGSTNPINVVRATLNGLKKIRSPEMISKKRGKIITII</sequence>
<protein>
    <recommendedName>
        <fullName evidence="1">Small ribosomal subunit protein uS5</fullName>
    </recommendedName>
    <alternativeName>
        <fullName evidence="2">30S ribosomal protein S5</fullName>
    </alternativeName>
</protein>
<comment type="function">
    <text evidence="1">With S4 and S12 plays an important role in translational accuracy.</text>
</comment>
<comment type="function">
    <text evidence="1">Located at the back of the 30S subunit body where it stabilizes the conformation of the head with respect to the body.</text>
</comment>
<comment type="subunit">
    <text evidence="1">Part of the 30S ribosomal subunit. Contacts proteins S4 and S8.</text>
</comment>
<comment type="domain">
    <text>The N-terminal domain interacts with the head of the 30S subunit; the C-terminal domain interacts with the body and contacts protein S4. The interaction surface between S4 and S5 is involved in control of translational fidelity.</text>
</comment>
<comment type="similarity">
    <text evidence="1">Belongs to the universal ribosomal protein uS5 family.</text>
</comment>
<proteinExistence type="inferred from homology"/>
<keyword id="KW-1185">Reference proteome</keyword>
<keyword id="KW-0687">Ribonucleoprotein</keyword>
<keyword id="KW-0689">Ribosomal protein</keyword>
<keyword id="KW-0694">RNA-binding</keyword>
<keyword id="KW-0699">rRNA-binding</keyword>